<proteinExistence type="inferred from homology"/>
<feature type="chain" id="PRO_1000096960" description="3-methyl-2-oxobutanoate hydroxymethyltransferase">
    <location>
        <begin position="1"/>
        <end position="293"/>
    </location>
</feature>
<feature type="region of interest" description="Disordered" evidence="2">
    <location>
        <begin position="1"/>
        <end position="26"/>
    </location>
</feature>
<feature type="active site" description="Proton acceptor" evidence="1">
    <location>
        <position position="209"/>
    </location>
</feature>
<feature type="binding site" evidence="1">
    <location>
        <begin position="68"/>
        <end position="69"/>
    </location>
    <ligand>
        <name>3-methyl-2-oxobutanoate</name>
        <dbReference type="ChEBI" id="CHEBI:11851"/>
    </ligand>
</feature>
<feature type="binding site" evidence="1">
    <location>
        <position position="68"/>
    </location>
    <ligand>
        <name>Mg(2+)</name>
        <dbReference type="ChEBI" id="CHEBI:18420"/>
    </ligand>
</feature>
<feature type="binding site" evidence="1">
    <location>
        <position position="111"/>
    </location>
    <ligand>
        <name>3-methyl-2-oxobutanoate</name>
        <dbReference type="ChEBI" id="CHEBI:11851"/>
    </ligand>
</feature>
<feature type="binding site" evidence="1">
    <location>
        <position position="111"/>
    </location>
    <ligand>
        <name>Mg(2+)</name>
        <dbReference type="ChEBI" id="CHEBI:18420"/>
    </ligand>
</feature>
<feature type="binding site" evidence="1">
    <location>
        <position position="140"/>
    </location>
    <ligand>
        <name>3-methyl-2-oxobutanoate</name>
        <dbReference type="ChEBI" id="CHEBI:11851"/>
    </ligand>
</feature>
<feature type="binding site" evidence="1">
    <location>
        <position position="142"/>
    </location>
    <ligand>
        <name>Mg(2+)</name>
        <dbReference type="ChEBI" id="CHEBI:18420"/>
    </ligand>
</feature>
<organism>
    <name type="scientific">Delftia acidovorans (strain DSM 14801 / SPH-1)</name>
    <dbReference type="NCBI Taxonomy" id="398578"/>
    <lineage>
        <taxon>Bacteria</taxon>
        <taxon>Pseudomonadati</taxon>
        <taxon>Pseudomonadota</taxon>
        <taxon>Betaproteobacteria</taxon>
        <taxon>Burkholderiales</taxon>
        <taxon>Comamonadaceae</taxon>
        <taxon>Delftia</taxon>
    </lineage>
</organism>
<reference key="1">
    <citation type="submission" date="2007-11" db="EMBL/GenBank/DDBJ databases">
        <title>Complete sequence of Delftia acidovorans DSM 14801 / SPH-1.</title>
        <authorList>
            <person name="Copeland A."/>
            <person name="Lucas S."/>
            <person name="Lapidus A."/>
            <person name="Barry K."/>
            <person name="Glavina del Rio T."/>
            <person name="Dalin E."/>
            <person name="Tice H."/>
            <person name="Pitluck S."/>
            <person name="Lowry S."/>
            <person name="Clum A."/>
            <person name="Schmutz J."/>
            <person name="Larimer F."/>
            <person name="Land M."/>
            <person name="Hauser L."/>
            <person name="Kyrpides N."/>
            <person name="Kim E."/>
            <person name="Schleheck D."/>
            <person name="Richardson P."/>
        </authorList>
    </citation>
    <scope>NUCLEOTIDE SEQUENCE [LARGE SCALE GENOMIC DNA]</scope>
    <source>
        <strain>DSM 14801 / SPH-1</strain>
    </source>
</reference>
<gene>
    <name evidence="1" type="primary">panB</name>
    <name type="ordered locus">Daci_1822</name>
</gene>
<keyword id="KW-0963">Cytoplasm</keyword>
<keyword id="KW-0460">Magnesium</keyword>
<keyword id="KW-0479">Metal-binding</keyword>
<keyword id="KW-0566">Pantothenate biosynthesis</keyword>
<keyword id="KW-1185">Reference proteome</keyword>
<keyword id="KW-0808">Transferase</keyword>
<name>PANB_DELAS</name>
<protein>
    <recommendedName>
        <fullName evidence="1">3-methyl-2-oxobutanoate hydroxymethyltransferase</fullName>
        <ecNumber evidence="1">2.1.2.11</ecNumber>
    </recommendedName>
    <alternativeName>
        <fullName evidence="1">Ketopantoate hydroxymethyltransferase</fullName>
        <shortName evidence="1">KPHMT</shortName>
    </alternativeName>
</protein>
<comment type="function">
    <text evidence="1">Catalyzes the reversible reaction in which hydroxymethyl group from 5,10-methylenetetrahydrofolate is transferred onto alpha-ketoisovalerate to form ketopantoate.</text>
</comment>
<comment type="catalytic activity">
    <reaction evidence="1">
        <text>3-methyl-2-oxobutanoate + (6R)-5,10-methylene-5,6,7,8-tetrahydrofolate + H2O = 2-dehydropantoate + (6S)-5,6,7,8-tetrahydrofolate</text>
        <dbReference type="Rhea" id="RHEA:11824"/>
        <dbReference type="ChEBI" id="CHEBI:11561"/>
        <dbReference type="ChEBI" id="CHEBI:11851"/>
        <dbReference type="ChEBI" id="CHEBI:15377"/>
        <dbReference type="ChEBI" id="CHEBI:15636"/>
        <dbReference type="ChEBI" id="CHEBI:57453"/>
        <dbReference type="EC" id="2.1.2.11"/>
    </reaction>
</comment>
<comment type="cofactor">
    <cofactor evidence="1">
        <name>Mg(2+)</name>
        <dbReference type="ChEBI" id="CHEBI:18420"/>
    </cofactor>
    <text evidence="1">Binds 1 Mg(2+) ion per subunit.</text>
</comment>
<comment type="pathway">
    <text evidence="1">Cofactor biosynthesis; (R)-pantothenate biosynthesis; (R)-pantoate from 3-methyl-2-oxobutanoate: step 1/2.</text>
</comment>
<comment type="subunit">
    <text evidence="1">Homodecamer; pentamer of dimers.</text>
</comment>
<comment type="subcellular location">
    <subcellularLocation>
        <location evidence="1">Cytoplasm</location>
    </subcellularLocation>
</comment>
<comment type="similarity">
    <text evidence="1">Belongs to the PanB family.</text>
</comment>
<accession>A9BV02</accession>
<dbReference type="EC" id="2.1.2.11" evidence="1"/>
<dbReference type="EMBL" id="CP000884">
    <property type="protein sequence ID" value="ABX34464.1"/>
    <property type="molecule type" value="Genomic_DNA"/>
</dbReference>
<dbReference type="RefSeq" id="WP_012203749.1">
    <property type="nucleotide sequence ID" value="NC_010002.1"/>
</dbReference>
<dbReference type="SMR" id="A9BV02"/>
<dbReference type="STRING" id="398578.Daci_1822"/>
<dbReference type="GeneID" id="94694503"/>
<dbReference type="KEGG" id="dac:Daci_1822"/>
<dbReference type="eggNOG" id="COG0413">
    <property type="taxonomic scope" value="Bacteria"/>
</dbReference>
<dbReference type="HOGENOM" id="CLU_036645_1_0_4"/>
<dbReference type="UniPathway" id="UPA00028">
    <property type="reaction ID" value="UER00003"/>
</dbReference>
<dbReference type="Proteomes" id="UP000000784">
    <property type="component" value="Chromosome"/>
</dbReference>
<dbReference type="GO" id="GO:0005737">
    <property type="term" value="C:cytoplasm"/>
    <property type="evidence" value="ECO:0007669"/>
    <property type="project" value="UniProtKB-SubCell"/>
</dbReference>
<dbReference type="GO" id="GO:0003864">
    <property type="term" value="F:3-methyl-2-oxobutanoate hydroxymethyltransferase activity"/>
    <property type="evidence" value="ECO:0007669"/>
    <property type="project" value="UniProtKB-UniRule"/>
</dbReference>
<dbReference type="GO" id="GO:0000287">
    <property type="term" value="F:magnesium ion binding"/>
    <property type="evidence" value="ECO:0007669"/>
    <property type="project" value="TreeGrafter"/>
</dbReference>
<dbReference type="GO" id="GO:0015940">
    <property type="term" value="P:pantothenate biosynthetic process"/>
    <property type="evidence" value="ECO:0007669"/>
    <property type="project" value="UniProtKB-UniRule"/>
</dbReference>
<dbReference type="CDD" id="cd06557">
    <property type="entry name" value="KPHMT-like"/>
    <property type="match status" value="1"/>
</dbReference>
<dbReference type="FunFam" id="3.20.20.60:FF:000003">
    <property type="entry name" value="3-methyl-2-oxobutanoate hydroxymethyltransferase"/>
    <property type="match status" value="1"/>
</dbReference>
<dbReference type="Gene3D" id="3.20.20.60">
    <property type="entry name" value="Phosphoenolpyruvate-binding domains"/>
    <property type="match status" value="1"/>
</dbReference>
<dbReference type="HAMAP" id="MF_00156">
    <property type="entry name" value="PanB"/>
    <property type="match status" value="1"/>
</dbReference>
<dbReference type="InterPro" id="IPR003700">
    <property type="entry name" value="Pantoate_hydroxy_MeTrfase"/>
</dbReference>
<dbReference type="InterPro" id="IPR015813">
    <property type="entry name" value="Pyrv/PenolPyrv_kinase-like_dom"/>
</dbReference>
<dbReference type="InterPro" id="IPR040442">
    <property type="entry name" value="Pyrv_kinase-like_dom_sf"/>
</dbReference>
<dbReference type="NCBIfam" id="TIGR00222">
    <property type="entry name" value="panB"/>
    <property type="match status" value="1"/>
</dbReference>
<dbReference type="NCBIfam" id="NF001452">
    <property type="entry name" value="PRK00311.1"/>
    <property type="match status" value="1"/>
</dbReference>
<dbReference type="PANTHER" id="PTHR20881">
    <property type="entry name" value="3-METHYL-2-OXOBUTANOATE HYDROXYMETHYLTRANSFERASE"/>
    <property type="match status" value="1"/>
</dbReference>
<dbReference type="PANTHER" id="PTHR20881:SF0">
    <property type="entry name" value="3-METHYL-2-OXOBUTANOATE HYDROXYMETHYLTRANSFERASE"/>
    <property type="match status" value="1"/>
</dbReference>
<dbReference type="Pfam" id="PF02548">
    <property type="entry name" value="Pantoate_transf"/>
    <property type="match status" value="1"/>
</dbReference>
<dbReference type="PIRSF" id="PIRSF000388">
    <property type="entry name" value="Pantoate_hydroxy_MeTrfase"/>
    <property type="match status" value="1"/>
</dbReference>
<dbReference type="SUPFAM" id="SSF51621">
    <property type="entry name" value="Phosphoenolpyruvate/pyruvate domain"/>
    <property type="match status" value="1"/>
</dbReference>
<evidence type="ECO:0000255" key="1">
    <source>
        <dbReference type="HAMAP-Rule" id="MF_00156"/>
    </source>
</evidence>
<evidence type="ECO:0000256" key="2">
    <source>
        <dbReference type="SAM" id="MobiDB-lite"/>
    </source>
</evidence>
<sequence>MTQAPVTAGTPYGTIPPASPLPQRRPVSLPRLAQMREAGEKITMVTAYDATFAAVADAAGVECILVGDSLGMVCQGLHSTVGVSLQDMCYHTASVARGLHRVQGTAWLIADMPYGSYAESREQAMRSACELMQAGAHMVKLEGGGWTAPTVQFLVERGVPVCAHLGLTPQTVHALGGYRVQGKSDEGAATLRRHALELQDAGASMLVLEMVPAQLSRELTAELPHCHTIGIGAGSGTAGQVLVLHDMLGVNLGKMARFVHNFMADAGSVKGAFEAYVHAVKNGSFPDDSKHAW</sequence>